<name>RHAA_SALCH</name>
<organism>
    <name type="scientific">Salmonella choleraesuis (strain SC-B67)</name>
    <dbReference type="NCBI Taxonomy" id="321314"/>
    <lineage>
        <taxon>Bacteria</taxon>
        <taxon>Pseudomonadati</taxon>
        <taxon>Pseudomonadota</taxon>
        <taxon>Gammaproteobacteria</taxon>
        <taxon>Enterobacterales</taxon>
        <taxon>Enterobacteriaceae</taxon>
        <taxon>Salmonella</taxon>
    </lineage>
</organism>
<proteinExistence type="inferred from homology"/>
<evidence type="ECO:0000255" key="1">
    <source>
        <dbReference type="HAMAP-Rule" id="MF_00541"/>
    </source>
</evidence>
<gene>
    <name evidence="1" type="primary">rhaA</name>
    <name type="ordered locus">SCH_3936</name>
</gene>
<keyword id="KW-0963">Cytoplasm</keyword>
<keyword id="KW-0413">Isomerase</keyword>
<keyword id="KW-0464">Manganese</keyword>
<keyword id="KW-0479">Metal-binding</keyword>
<keyword id="KW-0684">Rhamnose metabolism</keyword>
<accession>Q57HH0</accession>
<reference key="1">
    <citation type="journal article" date="2005" name="Nucleic Acids Res.">
        <title>The genome sequence of Salmonella enterica serovar Choleraesuis, a highly invasive and resistant zoonotic pathogen.</title>
        <authorList>
            <person name="Chiu C.-H."/>
            <person name="Tang P."/>
            <person name="Chu C."/>
            <person name="Hu S."/>
            <person name="Bao Q."/>
            <person name="Yu J."/>
            <person name="Chou Y.-Y."/>
            <person name="Wang H.-S."/>
            <person name="Lee Y.-S."/>
        </authorList>
    </citation>
    <scope>NUCLEOTIDE SEQUENCE [LARGE SCALE GENOMIC DNA]</scope>
    <source>
        <strain>SC-B67</strain>
    </source>
</reference>
<dbReference type="EC" id="5.3.1.14" evidence="1"/>
<dbReference type="EMBL" id="AE017220">
    <property type="protein sequence ID" value="AAX67842.1"/>
    <property type="molecule type" value="Genomic_DNA"/>
</dbReference>
<dbReference type="RefSeq" id="WP_000211472.1">
    <property type="nucleotide sequence ID" value="NC_006905.1"/>
</dbReference>
<dbReference type="SMR" id="Q57HH0"/>
<dbReference type="KEGG" id="sec:SCH_3936"/>
<dbReference type="HOGENOM" id="CLU_052790_0_0_6"/>
<dbReference type="UniPathway" id="UPA00541">
    <property type="reaction ID" value="UER00601"/>
</dbReference>
<dbReference type="Proteomes" id="UP000000538">
    <property type="component" value="Chromosome"/>
</dbReference>
<dbReference type="GO" id="GO:0005737">
    <property type="term" value="C:cytoplasm"/>
    <property type="evidence" value="ECO:0007669"/>
    <property type="project" value="UniProtKB-SubCell"/>
</dbReference>
<dbReference type="GO" id="GO:0008740">
    <property type="term" value="F:L-rhamnose isomerase activity"/>
    <property type="evidence" value="ECO:0007669"/>
    <property type="project" value="UniProtKB-UniRule"/>
</dbReference>
<dbReference type="GO" id="GO:0030145">
    <property type="term" value="F:manganese ion binding"/>
    <property type="evidence" value="ECO:0007669"/>
    <property type="project" value="UniProtKB-UniRule"/>
</dbReference>
<dbReference type="GO" id="GO:0019324">
    <property type="term" value="P:L-lyxose metabolic process"/>
    <property type="evidence" value="ECO:0007669"/>
    <property type="project" value="TreeGrafter"/>
</dbReference>
<dbReference type="GO" id="GO:0019301">
    <property type="term" value="P:rhamnose catabolic process"/>
    <property type="evidence" value="ECO:0007669"/>
    <property type="project" value="UniProtKB-UniRule"/>
</dbReference>
<dbReference type="FunFam" id="3.20.20.150:FF:000006">
    <property type="entry name" value="L-rhamnose isomerase"/>
    <property type="match status" value="1"/>
</dbReference>
<dbReference type="Gene3D" id="3.20.20.150">
    <property type="entry name" value="Divalent-metal-dependent TIM barrel enzymes"/>
    <property type="match status" value="1"/>
</dbReference>
<dbReference type="HAMAP" id="MF_00541">
    <property type="entry name" value="RhaA"/>
    <property type="match status" value="1"/>
</dbReference>
<dbReference type="InterPro" id="IPR050337">
    <property type="entry name" value="L-rhamnose_isomerase"/>
</dbReference>
<dbReference type="InterPro" id="IPR009308">
    <property type="entry name" value="Rhamnose_isomerase"/>
</dbReference>
<dbReference type="InterPro" id="IPR036237">
    <property type="entry name" value="Xyl_isomerase-like_sf"/>
</dbReference>
<dbReference type="NCBIfam" id="NF002203">
    <property type="entry name" value="PRK01076.1"/>
    <property type="match status" value="1"/>
</dbReference>
<dbReference type="NCBIfam" id="TIGR01748">
    <property type="entry name" value="rhaA"/>
    <property type="match status" value="1"/>
</dbReference>
<dbReference type="PANTHER" id="PTHR30268">
    <property type="entry name" value="L-RHAMNOSE ISOMERASE"/>
    <property type="match status" value="1"/>
</dbReference>
<dbReference type="PANTHER" id="PTHR30268:SF0">
    <property type="entry name" value="L-RHAMNOSE ISOMERASE"/>
    <property type="match status" value="1"/>
</dbReference>
<dbReference type="Pfam" id="PF06134">
    <property type="entry name" value="RhaA"/>
    <property type="match status" value="1"/>
</dbReference>
<dbReference type="SUPFAM" id="SSF51658">
    <property type="entry name" value="Xylose isomerase-like"/>
    <property type="match status" value="1"/>
</dbReference>
<sequence length="419" mass="47457">MTTQLEQAWELAKQRFAAVGIDVEEALRQLDRLPVSMHCWQGDDVAGFENPEGSLTGGIQSTGNYPGKARNATELRADLEQALRLIPGPKRLNLHAIYLESDTPVARDQIKPEHFKNWVEWAKANRLGLDFNPTCFSHPLSADGFTLSHPDAKIRQFWIDHCKASRRVSAYFGEQLGTPSVMNIWIPDGMKDITVDRLAPRQRLLEALDEVISEKFDPAHHIDAVESKLFGIGAESYTVGSNEFYMGYATSRQTALCLDAGHFHPTEVISDKISAAMLYVPRLLLHVSRPVRWDSDHVVLLDDETQAIASEIVRHNLFDRVHIGLDFFDASINRVAAWVIGTRNMKKALLRALLEPTDQLRQLEASGDYTARLALLEEQKSLPWQAVWEMYCQRHDTPTGSQWLDSVRTYEKEILSKRS</sequence>
<comment type="function">
    <text evidence="1">Catalyzes the interconversion of L-rhamnose and L-rhamnulose.</text>
</comment>
<comment type="catalytic activity">
    <reaction evidence="1">
        <text>L-rhamnopyranose = L-rhamnulose</text>
        <dbReference type="Rhea" id="RHEA:23160"/>
        <dbReference type="ChEBI" id="CHEBI:17897"/>
        <dbReference type="ChEBI" id="CHEBI:62346"/>
        <dbReference type="EC" id="5.3.1.14"/>
    </reaction>
</comment>
<comment type="cofactor">
    <cofactor evidence="1">
        <name>Mn(2+)</name>
        <dbReference type="ChEBI" id="CHEBI:29035"/>
    </cofactor>
    <text evidence="1">Binds 1 Mn(2+) ion per subunit.</text>
</comment>
<comment type="pathway">
    <text evidence="1">Carbohydrate degradation; L-rhamnose degradation; glycerone phosphate from L-rhamnose: step 1/3.</text>
</comment>
<comment type="subunit">
    <text evidence="1">Homotetramer.</text>
</comment>
<comment type="subcellular location">
    <subcellularLocation>
        <location evidence="1">Cytoplasm</location>
    </subcellularLocation>
</comment>
<comment type="similarity">
    <text evidence="1">Belongs to the rhamnose isomerase family.</text>
</comment>
<protein>
    <recommendedName>
        <fullName evidence="1">L-rhamnose isomerase</fullName>
        <ecNumber evidence="1">5.3.1.14</ecNumber>
    </recommendedName>
</protein>
<feature type="chain" id="PRO_1000017720" description="L-rhamnose isomerase">
    <location>
        <begin position="1"/>
        <end position="419"/>
    </location>
</feature>
<feature type="binding site" evidence="1">
    <location>
        <position position="262"/>
    </location>
    <ligand>
        <name>Mn(2+)</name>
        <dbReference type="ChEBI" id="CHEBI:29035"/>
    </ligand>
</feature>
<feature type="binding site" evidence="1">
    <location>
        <position position="294"/>
    </location>
    <ligand>
        <name>Mn(2+)</name>
        <dbReference type="ChEBI" id="CHEBI:29035"/>
    </ligand>
</feature>
<feature type="binding site" evidence="1">
    <location>
        <position position="296"/>
    </location>
    <ligand>
        <name>Mn(2+)</name>
        <dbReference type="ChEBI" id="CHEBI:29035"/>
    </ligand>
</feature>